<protein>
    <recommendedName>
        <fullName evidence="1">Mannuronan C5-epimerase</fullName>
        <ecNumber evidence="1">5.1.3.37</ecNumber>
    </recommendedName>
    <alternativeName>
        <fullName evidence="1">Poly(beta-D-mannuronate) C5 epimerase</fullName>
    </alternativeName>
</protein>
<accession>Q88NC9</accession>
<evidence type="ECO:0000250" key="1">
    <source>
        <dbReference type="UniProtKB" id="Q51371"/>
    </source>
</evidence>
<evidence type="ECO:0000250" key="2">
    <source>
        <dbReference type="UniProtKB" id="Q887Q3"/>
    </source>
</evidence>
<evidence type="ECO:0000255" key="3"/>
<evidence type="ECO:0000305" key="4"/>
<organism>
    <name type="scientific">Pseudomonas putida (strain ATCC 47054 / DSM 6125 / CFBP 8728 / NCIMB 11950 / KT2440)</name>
    <dbReference type="NCBI Taxonomy" id="160488"/>
    <lineage>
        <taxon>Bacteria</taxon>
        <taxon>Pseudomonadati</taxon>
        <taxon>Pseudomonadota</taxon>
        <taxon>Gammaproteobacteria</taxon>
        <taxon>Pseudomonadales</taxon>
        <taxon>Pseudomonadaceae</taxon>
        <taxon>Pseudomonas</taxon>
    </lineage>
</organism>
<gene>
    <name type="primary">algG</name>
    <name type="ordered locus">PP_1283</name>
</gene>
<keyword id="KW-0016">Alginate biosynthesis</keyword>
<keyword id="KW-0413">Isomerase</keyword>
<keyword id="KW-0574">Periplasm</keyword>
<keyword id="KW-1185">Reference proteome</keyword>
<keyword id="KW-0677">Repeat</keyword>
<keyword id="KW-0732">Signal</keyword>
<comment type="function">
    <text evidence="1">Catalyzes the epimerization of beta-D-mannuronate to alpha-L-guluronate during the synthesis of the linear polysaccharide alginate. In addition, is part of a periplasmic protein complex that protects alginate from degradation by AlgL by channeling the newly formed alginate polymer through a scaffold that transfers the alginate polymer through the periplasmic space to the outer membrane secretin AlgE.</text>
</comment>
<comment type="catalytic activity">
    <reaction evidence="1">
        <text>[(1-&gt;4)-beta-D-mannuronosyl](n) = [alginate](n)</text>
        <dbReference type="Rhea" id="RHEA:45572"/>
        <dbReference type="Rhea" id="RHEA-COMP:11264"/>
        <dbReference type="Rhea" id="RHEA-COMP:11270"/>
        <dbReference type="ChEBI" id="CHEBI:58187"/>
        <dbReference type="ChEBI" id="CHEBI:85311"/>
        <dbReference type="EC" id="5.1.3.37"/>
    </reaction>
</comment>
<comment type="pathway">
    <text evidence="1">Glycan biosynthesis; alginate biosynthesis.</text>
</comment>
<comment type="subcellular location">
    <subcellularLocation>
        <location evidence="1">Periplasm</location>
    </subcellularLocation>
</comment>
<comment type="similarity">
    <text evidence="4">Belongs to the D-mannuronate C5-epimerase family.</text>
</comment>
<comment type="sequence caution" evidence="4">
    <conflict type="erroneous initiation">
        <sequence resource="EMBL-CDS" id="AAN66907"/>
    </conflict>
</comment>
<sequence length="519" mass="57936">MNLHPHLRHSLLASALLLASGLATAAEPQVIAKELQQAKTYTVASAPIEPLQMDPPKLPDLTGFTAEAVQKKIDRRHKGKVSLRRMFQEDTLKEFVGGDNKAAEWVQRQHGIPQAIFVDDGHVDLTELSKKVPKQYFSEVEPGVYLARLPIVVGQKGILEIDGKVKQLRLSQEGGAFLVNDGKLFVTDTQVTGWREKDNGPATFRSPKEFRPFLLSWGGTETYIVNTKMASFGYAKSKSYGVSISQYTPNMAKRMGRPEPTGWIIGSEFSDMWYGFYCYETQDFVIKDSTYRDNIVYGIDPHDRSHRLIIAGNTVYGTKKKHGIIVSREVNDSWIINNKSYDNKLSGVVIDRNSVNNLVAYNEIYRNHTDGITLYESGDNLIWGNKLVNNRRHGIRVRNSVNIRLYENVAMANGLVGVYGHIKDLSDTDRDIALDPFDTKVSLIVVGGELSANGSGPLSIDSPLSVELYKVSMLAPRKASGISLNGVLGERQDEILDLLVRQQKAVLIDPVERQTEMID</sequence>
<dbReference type="EC" id="5.1.3.37" evidence="1"/>
<dbReference type="EMBL" id="AE015451">
    <property type="protein sequence ID" value="AAN66907.1"/>
    <property type="status" value="ALT_INIT"/>
    <property type="molecule type" value="Genomic_DNA"/>
</dbReference>
<dbReference type="RefSeq" id="NP_743443.2">
    <property type="nucleotide sequence ID" value="NC_002947.4"/>
</dbReference>
<dbReference type="RefSeq" id="WP_003251754.1">
    <property type="nucleotide sequence ID" value="NZ_CP169744.1"/>
</dbReference>
<dbReference type="SMR" id="Q88NC9"/>
<dbReference type="STRING" id="160488.PP_1283"/>
<dbReference type="PaxDb" id="160488-PP_1283"/>
<dbReference type="GeneID" id="83682283"/>
<dbReference type="KEGG" id="ppu:PP_1283"/>
<dbReference type="PATRIC" id="fig|160488.4.peg.1360"/>
<dbReference type="eggNOG" id="COG3420">
    <property type="taxonomic scope" value="Bacteria"/>
</dbReference>
<dbReference type="HOGENOM" id="CLU_038044_0_0_6"/>
<dbReference type="OrthoDB" id="6189730at2"/>
<dbReference type="PhylomeDB" id="Q88NC9"/>
<dbReference type="BioCyc" id="PPUT160488:G1G01-1370-MONOMER"/>
<dbReference type="UniPathway" id="UPA00286"/>
<dbReference type="Proteomes" id="UP000000556">
    <property type="component" value="Chromosome"/>
</dbReference>
<dbReference type="GO" id="GO:0042597">
    <property type="term" value="C:periplasmic space"/>
    <property type="evidence" value="ECO:0007669"/>
    <property type="project" value="UniProtKB-SubCell"/>
</dbReference>
<dbReference type="GO" id="GO:0016853">
    <property type="term" value="F:isomerase activity"/>
    <property type="evidence" value="ECO:0007669"/>
    <property type="project" value="UniProtKB-KW"/>
</dbReference>
<dbReference type="GO" id="GO:0042121">
    <property type="term" value="P:alginic acid biosynthetic process"/>
    <property type="evidence" value="ECO:0007669"/>
    <property type="project" value="UniProtKB-UniPathway"/>
</dbReference>
<dbReference type="Gene3D" id="2.160.20.10">
    <property type="entry name" value="Single-stranded right-handed beta-helix, Pectin lyase-like"/>
    <property type="match status" value="1"/>
</dbReference>
<dbReference type="InterPro" id="IPR039448">
    <property type="entry name" value="Beta_helix"/>
</dbReference>
<dbReference type="InterPro" id="IPR006633">
    <property type="entry name" value="Carb-bd_sugar_hydrolysis-dom"/>
</dbReference>
<dbReference type="InterPro" id="IPR053409">
    <property type="entry name" value="Mannuronan_C5-epimerase"/>
</dbReference>
<dbReference type="InterPro" id="IPR022441">
    <property type="entry name" value="Para_beta_helix_rpt-2"/>
</dbReference>
<dbReference type="InterPro" id="IPR006626">
    <property type="entry name" value="PbH1"/>
</dbReference>
<dbReference type="InterPro" id="IPR012334">
    <property type="entry name" value="Pectin_lyas_fold"/>
</dbReference>
<dbReference type="InterPro" id="IPR011050">
    <property type="entry name" value="Pectin_lyase_fold/virulence"/>
</dbReference>
<dbReference type="NCBIfam" id="NF038177">
    <property type="entry name" value="epimerase_AlgG"/>
    <property type="match status" value="1"/>
</dbReference>
<dbReference type="NCBIfam" id="TIGR03804">
    <property type="entry name" value="para_beta_helix"/>
    <property type="match status" value="1"/>
</dbReference>
<dbReference type="Pfam" id="PF13229">
    <property type="entry name" value="Beta_helix"/>
    <property type="match status" value="1"/>
</dbReference>
<dbReference type="SMART" id="SM00722">
    <property type="entry name" value="CASH"/>
    <property type="match status" value="1"/>
</dbReference>
<dbReference type="SMART" id="SM00710">
    <property type="entry name" value="PbH1"/>
    <property type="match status" value="6"/>
</dbReference>
<dbReference type="SUPFAM" id="SSF51126">
    <property type="entry name" value="Pectin lyase-like"/>
    <property type="match status" value="1"/>
</dbReference>
<feature type="signal peptide" evidence="3">
    <location>
        <begin position="1"/>
        <end position="25"/>
    </location>
</feature>
<feature type="chain" id="PRO_0000001127" description="Mannuronan C5-epimerase">
    <location>
        <begin position="26"/>
        <end position="519"/>
    </location>
</feature>
<feature type="repeat" description="PbH1 1" evidence="3">
    <location>
        <begin position="219"/>
        <end position="246"/>
    </location>
</feature>
<feature type="repeat" description="PbH1 2" evidence="3">
    <location>
        <begin position="281"/>
        <end position="303"/>
    </location>
</feature>
<feature type="repeat" description="PbH1 3" evidence="3">
    <location>
        <begin position="305"/>
        <end position="328"/>
    </location>
</feature>
<feature type="repeat" description="PbH1 4" evidence="3">
    <location>
        <begin position="330"/>
        <end position="352"/>
    </location>
</feature>
<feature type="repeat" description="PbH1 5" evidence="3">
    <location>
        <begin position="354"/>
        <end position="376"/>
    </location>
</feature>
<feature type="repeat" description="PbH1 6" evidence="3">
    <location>
        <begin position="377"/>
        <end position="399"/>
    </location>
</feature>
<feature type="active site" description="Proton acceptor" evidence="2">
    <location>
        <position position="302"/>
    </location>
</feature>
<proteinExistence type="inferred from homology"/>
<name>ALGG_PSEPK</name>
<reference key="1">
    <citation type="journal article" date="2002" name="Environ. Microbiol.">
        <title>Complete genome sequence and comparative analysis of the metabolically versatile Pseudomonas putida KT2440.</title>
        <authorList>
            <person name="Nelson K.E."/>
            <person name="Weinel C."/>
            <person name="Paulsen I.T."/>
            <person name="Dodson R.J."/>
            <person name="Hilbert H."/>
            <person name="Martins dos Santos V.A.P."/>
            <person name="Fouts D.E."/>
            <person name="Gill S.R."/>
            <person name="Pop M."/>
            <person name="Holmes M."/>
            <person name="Brinkac L.M."/>
            <person name="Beanan M.J."/>
            <person name="DeBoy R.T."/>
            <person name="Daugherty S.C."/>
            <person name="Kolonay J.F."/>
            <person name="Madupu R."/>
            <person name="Nelson W.C."/>
            <person name="White O."/>
            <person name="Peterson J.D."/>
            <person name="Khouri H.M."/>
            <person name="Hance I."/>
            <person name="Chris Lee P."/>
            <person name="Holtzapple E.K."/>
            <person name="Scanlan D."/>
            <person name="Tran K."/>
            <person name="Moazzez A."/>
            <person name="Utterback T.R."/>
            <person name="Rizzo M."/>
            <person name="Lee K."/>
            <person name="Kosack D."/>
            <person name="Moestl D."/>
            <person name="Wedler H."/>
            <person name="Lauber J."/>
            <person name="Stjepandic D."/>
            <person name="Hoheisel J."/>
            <person name="Straetz M."/>
            <person name="Heim S."/>
            <person name="Kiewitz C."/>
            <person name="Eisen J.A."/>
            <person name="Timmis K.N."/>
            <person name="Duesterhoeft A."/>
            <person name="Tuemmler B."/>
            <person name="Fraser C.M."/>
        </authorList>
    </citation>
    <scope>NUCLEOTIDE SEQUENCE [LARGE SCALE GENOMIC DNA]</scope>
    <source>
        <strain>ATCC 47054 / DSM 6125 / CFBP 8728 / NCIMB 11950 / KT2440</strain>
    </source>
</reference>